<gene>
    <name evidence="1" type="primary">rpsQ</name>
    <name type="ordered locus">Rcas_4017</name>
</gene>
<reference key="1">
    <citation type="submission" date="2007-08" db="EMBL/GenBank/DDBJ databases">
        <title>Complete sequence of Roseiflexus castenholzii DSM 13941.</title>
        <authorList>
            <consortium name="US DOE Joint Genome Institute"/>
            <person name="Copeland A."/>
            <person name="Lucas S."/>
            <person name="Lapidus A."/>
            <person name="Barry K."/>
            <person name="Glavina del Rio T."/>
            <person name="Dalin E."/>
            <person name="Tice H."/>
            <person name="Pitluck S."/>
            <person name="Thompson L.S."/>
            <person name="Brettin T."/>
            <person name="Bruce D."/>
            <person name="Detter J.C."/>
            <person name="Han C."/>
            <person name="Tapia R."/>
            <person name="Schmutz J."/>
            <person name="Larimer F."/>
            <person name="Land M."/>
            <person name="Hauser L."/>
            <person name="Kyrpides N."/>
            <person name="Mikhailova N."/>
            <person name="Bryant D.A."/>
            <person name="Hanada S."/>
            <person name="Tsukatani Y."/>
            <person name="Richardson P."/>
        </authorList>
    </citation>
    <scope>NUCLEOTIDE SEQUENCE [LARGE SCALE GENOMIC DNA]</scope>
    <source>
        <strain>DSM 13941 / HLO8</strain>
    </source>
</reference>
<sequence length="86" mass="10186">MTEGRRRQFKVGRVVSNKMQKTVVVAVDYLKPHPLYRKIVRRTSKFHAHDEQQCQIGDVVRIGETRPLSKTKRWEVVEIIKRNEEA</sequence>
<dbReference type="EMBL" id="CP000804">
    <property type="protein sequence ID" value="ABU60050.1"/>
    <property type="molecule type" value="Genomic_DNA"/>
</dbReference>
<dbReference type="RefSeq" id="WP_012122472.1">
    <property type="nucleotide sequence ID" value="NC_009767.1"/>
</dbReference>
<dbReference type="SMR" id="A7NR54"/>
<dbReference type="STRING" id="383372.Rcas_4017"/>
<dbReference type="KEGG" id="rca:Rcas_4017"/>
<dbReference type="eggNOG" id="COG0186">
    <property type="taxonomic scope" value="Bacteria"/>
</dbReference>
<dbReference type="HOGENOM" id="CLU_073626_1_1_0"/>
<dbReference type="OrthoDB" id="9811714at2"/>
<dbReference type="Proteomes" id="UP000000263">
    <property type="component" value="Chromosome"/>
</dbReference>
<dbReference type="GO" id="GO:0022627">
    <property type="term" value="C:cytosolic small ribosomal subunit"/>
    <property type="evidence" value="ECO:0007669"/>
    <property type="project" value="TreeGrafter"/>
</dbReference>
<dbReference type="GO" id="GO:0019843">
    <property type="term" value="F:rRNA binding"/>
    <property type="evidence" value="ECO:0007669"/>
    <property type="project" value="UniProtKB-UniRule"/>
</dbReference>
<dbReference type="GO" id="GO:0003735">
    <property type="term" value="F:structural constituent of ribosome"/>
    <property type="evidence" value="ECO:0007669"/>
    <property type="project" value="InterPro"/>
</dbReference>
<dbReference type="GO" id="GO:0006412">
    <property type="term" value="P:translation"/>
    <property type="evidence" value="ECO:0007669"/>
    <property type="project" value="UniProtKB-UniRule"/>
</dbReference>
<dbReference type="CDD" id="cd00364">
    <property type="entry name" value="Ribosomal_uS17"/>
    <property type="match status" value="1"/>
</dbReference>
<dbReference type="Gene3D" id="2.40.50.140">
    <property type="entry name" value="Nucleic acid-binding proteins"/>
    <property type="match status" value="1"/>
</dbReference>
<dbReference type="HAMAP" id="MF_01345_B">
    <property type="entry name" value="Ribosomal_uS17_B"/>
    <property type="match status" value="1"/>
</dbReference>
<dbReference type="InterPro" id="IPR012340">
    <property type="entry name" value="NA-bd_OB-fold"/>
</dbReference>
<dbReference type="InterPro" id="IPR000266">
    <property type="entry name" value="Ribosomal_uS17"/>
</dbReference>
<dbReference type="InterPro" id="IPR019984">
    <property type="entry name" value="Ribosomal_uS17_bact/chlr"/>
</dbReference>
<dbReference type="InterPro" id="IPR019979">
    <property type="entry name" value="Ribosomal_uS17_CS"/>
</dbReference>
<dbReference type="NCBIfam" id="NF004123">
    <property type="entry name" value="PRK05610.1"/>
    <property type="match status" value="1"/>
</dbReference>
<dbReference type="NCBIfam" id="TIGR03635">
    <property type="entry name" value="uS17_bact"/>
    <property type="match status" value="1"/>
</dbReference>
<dbReference type="PANTHER" id="PTHR10744">
    <property type="entry name" value="40S RIBOSOMAL PROTEIN S11 FAMILY MEMBER"/>
    <property type="match status" value="1"/>
</dbReference>
<dbReference type="PANTHER" id="PTHR10744:SF1">
    <property type="entry name" value="SMALL RIBOSOMAL SUBUNIT PROTEIN US17M"/>
    <property type="match status" value="1"/>
</dbReference>
<dbReference type="Pfam" id="PF00366">
    <property type="entry name" value="Ribosomal_S17"/>
    <property type="match status" value="1"/>
</dbReference>
<dbReference type="PRINTS" id="PR00973">
    <property type="entry name" value="RIBOSOMALS17"/>
</dbReference>
<dbReference type="SUPFAM" id="SSF50249">
    <property type="entry name" value="Nucleic acid-binding proteins"/>
    <property type="match status" value="1"/>
</dbReference>
<dbReference type="PROSITE" id="PS00056">
    <property type="entry name" value="RIBOSOMAL_S17"/>
    <property type="match status" value="1"/>
</dbReference>
<feature type="chain" id="PRO_1000086851" description="Small ribosomal subunit protein uS17">
    <location>
        <begin position="1"/>
        <end position="86"/>
    </location>
</feature>
<accession>A7NR54</accession>
<keyword id="KW-1185">Reference proteome</keyword>
<keyword id="KW-0687">Ribonucleoprotein</keyword>
<keyword id="KW-0689">Ribosomal protein</keyword>
<keyword id="KW-0694">RNA-binding</keyword>
<keyword id="KW-0699">rRNA-binding</keyword>
<name>RS17_ROSCS</name>
<protein>
    <recommendedName>
        <fullName evidence="1">Small ribosomal subunit protein uS17</fullName>
    </recommendedName>
    <alternativeName>
        <fullName evidence="2">30S ribosomal protein S17</fullName>
    </alternativeName>
</protein>
<comment type="function">
    <text evidence="1">One of the primary rRNA binding proteins, it binds specifically to the 5'-end of 16S ribosomal RNA.</text>
</comment>
<comment type="subunit">
    <text evidence="1">Part of the 30S ribosomal subunit.</text>
</comment>
<comment type="similarity">
    <text evidence="1">Belongs to the universal ribosomal protein uS17 family.</text>
</comment>
<proteinExistence type="inferred from homology"/>
<evidence type="ECO:0000255" key="1">
    <source>
        <dbReference type="HAMAP-Rule" id="MF_01345"/>
    </source>
</evidence>
<evidence type="ECO:0000305" key="2"/>
<organism>
    <name type="scientific">Roseiflexus castenholzii (strain DSM 13941 / HLO8)</name>
    <dbReference type="NCBI Taxonomy" id="383372"/>
    <lineage>
        <taxon>Bacteria</taxon>
        <taxon>Bacillati</taxon>
        <taxon>Chloroflexota</taxon>
        <taxon>Chloroflexia</taxon>
        <taxon>Chloroflexales</taxon>
        <taxon>Roseiflexineae</taxon>
        <taxon>Roseiflexaceae</taxon>
        <taxon>Roseiflexus</taxon>
    </lineage>
</organism>